<dbReference type="EMBL" id="AP003376">
    <property type="protein sequence ID" value="BAD87519.1"/>
    <property type="molecule type" value="Genomic_DNA"/>
</dbReference>
<dbReference type="EMBL" id="AP008207">
    <property type="protein sequence ID" value="BAF06139.1"/>
    <property type="molecule type" value="Genomic_DNA"/>
</dbReference>
<dbReference type="EMBL" id="AP014957">
    <property type="protein sequence ID" value="BAS74307.1"/>
    <property type="molecule type" value="Genomic_DNA"/>
</dbReference>
<dbReference type="EMBL" id="CM000138">
    <property type="protein sequence ID" value="EEE55369.1"/>
    <property type="molecule type" value="Genomic_DNA"/>
</dbReference>
<dbReference type="EMBL" id="AK067648">
    <property type="status" value="NOT_ANNOTATED_CDS"/>
    <property type="molecule type" value="mRNA"/>
</dbReference>
<dbReference type="RefSeq" id="XP_015651194.1">
    <property type="nucleotide sequence ID" value="XM_015795708.1"/>
</dbReference>
<dbReference type="SMR" id="Q5JLY8"/>
<dbReference type="FunCoup" id="Q5JLY8">
    <property type="interactions" value="1429"/>
</dbReference>
<dbReference type="STRING" id="39947.Q5JLY8"/>
<dbReference type="PaxDb" id="39947-Q5JLY8"/>
<dbReference type="EnsemblPlants" id="Os01t0744400-01">
    <property type="protein sequence ID" value="Os01t0744400-01"/>
    <property type="gene ID" value="Os01g0744400"/>
</dbReference>
<dbReference type="Gramene" id="Os01t0744400-01">
    <property type="protein sequence ID" value="Os01t0744400-01"/>
    <property type="gene ID" value="Os01g0744400"/>
</dbReference>
<dbReference type="KEGG" id="dosa:Os01g0744400"/>
<dbReference type="eggNOG" id="ENOG502QT7E">
    <property type="taxonomic scope" value="Eukaryota"/>
</dbReference>
<dbReference type="HOGENOM" id="CLU_405131_0_0_1"/>
<dbReference type="InParanoid" id="Q5JLY8"/>
<dbReference type="OMA" id="CSSYEAH"/>
<dbReference type="OrthoDB" id="248903at2759"/>
<dbReference type="Proteomes" id="UP000000763">
    <property type="component" value="Chromosome 1"/>
</dbReference>
<dbReference type="Proteomes" id="UP000007752">
    <property type="component" value="Chromosome 1"/>
</dbReference>
<dbReference type="Proteomes" id="UP000059680">
    <property type="component" value="Chromosome 1"/>
</dbReference>
<dbReference type="GO" id="GO:0031985">
    <property type="term" value="C:Golgi cisterna"/>
    <property type="evidence" value="ECO:0000318"/>
    <property type="project" value="GO_Central"/>
</dbReference>
<dbReference type="GO" id="GO:0000139">
    <property type="term" value="C:Golgi membrane"/>
    <property type="evidence" value="ECO:0000318"/>
    <property type="project" value="GO_Central"/>
</dbReference>
<dbReference type="GO" id="GO:0007030">
    <property type="term" value="P:Golgi organization"/>
    <property type="evidence" value="ECO:0000318"/>
    <property type="project" value="GO_Central"/>
</dbReference>
<dbReference type="GO" id="GO:0000301">
    <property type="term" value="P:retrograde transport, vesicle recycling within Golgi"/>
    <property type="evidence" value="ECO:0000318"/>
    <property type="project" value="GO_Central"/>
</dbReference>
<dbReference type="InterPro" id="IPR019177">
    <property type="entry name" value="Golgin_subfamily_A_member_5"/>
</dbReference>
<dbReference type="PANTHER" id="PTHR13815:SF7">
    <property type="entry name" value="GOLGIN SUBFAMILY A MEMBER 5"/>
    <property type="match status" value="1"/>
</dbReference>
<dbReference type="PANTHER" id="PTHR13815">
    <property type="entry name" value="GOLGIN-84"/>
    <property type="match status" value="1"/>
</dbReference>
<dbReference type="Pfam" id="PF09787">
    <property type="entry name" value="Golgin_A5"/>
    <property type="match status" value="1"/>
</dbReference>
<protein>
    <recommendedName>
        <fullName>Golgin-84</fullName>
    </recommendedName>
</protein>
<evidence type="ECO:0000250" key="1"/>
<evidence type="ECO:0000255" key="2"/>
<evidence type="ECO:0000256" key="3">
    <source>
        <dbReference type="SAM" id="MobiDB-lite"/>
    </source>
</evidence>
<evidence type="ECO:0000305" key="4"/>
<evidence type="ECO:0000312" key="5">
    <source>
        <dbReference type="EMBL" id="EEE55369.1"/>
    </source>
</evidence>
<sequence>MASWLKVAEDLLEVVDRRAKIVATELSDEQSSPQPSGSSSQEGQAKKGKLREKGPLKLATGDAGSRTAAQKERKSRQPPRERIKIEKIRPSPPVDSSSVDASASKPDVSSSDVKGLDDDGGAEKEEKVVVDRKNDIGAEVVDTEVEVQSTERSAEDAAIVVDGAADSGNSEGAAESSAPSVPDERCEPSISNQDAEIVSAVNLEEKDSAMEVIHEKNIKEVPDTQVSGKSQDSKREGLSDSPESTENQQEHKLDSGSVKDQDQLEEARGLLKNVVKTGQSKEARLARVCAGLSSRLQEYKSENAQLEELLVQEREKCSSYEAHMKQLQQELSMSRVEGSRAESNMVDALTAKNAEIESLVKSLDSWKKKAAASEEKLAALQEDMDGLKRNRELTETRVIQALREELATVERRAEEERIAHNATKMAAVEREVELEHRAVEASNALARIQRAADQSSSRAMELEHKVAVLEVECASLQQELQEMEARNRRAQKKPSEEANQVIQMQAWQEEVERARQSQREAETKISSLEAELQKMRVEMAGMKRDAEHYSRQEHVELEKRYRELTDLLYHKQTQLESMASEKAALEFQLEKSIKQFHEVQMEAERSRVARRSASAWEEDADIKALEPLPLHHRHMATANQQLQKAAKLLDSGAVRATRFLWRHPVARVSLLFYLVFVHLFLMYLMHRLQDFASREGPTAMGGLANSDLP</sequence>
<keyword id="KW-0175">Coiled coil</keyword>
<keyword id="KW-0333">Golgi apparatus</keyword>
<keyword id="KW-0472">Membrane</keyword>
<keyword id="KW-1185">Reference proteome</keyword>
<keyword id="KW-0735">Signal-anchor</keyword>
<keyword id="KW-0812">Transmembrane</keyword>
<keyword id="KW-1133">Transmembrane helix</keyword>
<name>GOGA5_ORYSJ</name>
<proteinExistence type="evidence at transcript level"/>
<accession>Q5JLY8</accession>
<accession>Q0JJD9</accession>
<comment type="function">
    <text evidence="1">May be involved in maintaining Golgi structure and in intra-Golgi transport.</text>
</comment>
<comment type="subcellular location">
    <subcellularLocation>
        <location evidence="4">Golgi apparatus membrane</location>
        <topology evidence="4">Single-pass type II membrane protein</topology>
    </subcellularLocation>
</comment>
<feature type="chain" id="PRO_0000247497" description="Golgin-84">
    <location>
        <begin position="1"/>
        <end position="709"/>
    </location>
</feature>
<feature type="topological domain" description="Cytoplasmic" evidence="2">
    <location>
        <begin position="1"/>
        <end position="664"/>
    </location>
</feature>
<feature type="transmembrane region" description="Helical; Signal-anchor for type II membrane protein" evidence="2">
    <location>
        <begin position="665"/>
        <end position="684"/>
    </location>
</feature>
<feature type="topological domain" description="Lumenal" evidence="2">
    <location>
        <begin position="685"/>
        <end position="707"/>
    </location>
</feature>
<feature type="region of interest" description="Disordered" evidence="3">
    <location>
        <begin position="24"/>
        <end position="132"/>
    </location>
</feature>
<feature type="region of interest" description="Disordered" evidence="3">
    <location>
        <begin position="144"/>
        <end position="195"/>
    </location>
</feature>
<feature type="region of interest" description="Disordered" evidence="3">
    <location>
        <begin position="211"/>
        <end position="265"/>
    </location>
</feature>
<feature type="coiled-coil region" evidence="2">
    <location>
        <begin position="287"/>
        <end position="592"/>
    </location>
</feature>
<feature type="compositionally biased region" description="Low complexity" evidence="3">
    <location>
        <begin position="29"/>
        <end position="43"/>
    </location>
</feature>
<feature type="compositionally biased region" description="Basic and acidic residues" evidence="3">
    <location>
        <begin position="78"/>
        <end position="89"/>
    </location>
</feature>
<feature type="compositionally biased region" description="Low complexity" evidence="3">
    <location>
        <begin position="94"/>
        <end position="113"/>
    </location>
</feature>
<feature type="compositionally biased region" description="Basic and acidic residues" evidence="3">
    <location>
        <begin position="114"/>
        <end position="132"/>
    </location>
</feature>
<feature type="compositionally biased region" description="Low complexity" evidence="3">
    <location>
        <begin position="162"/>
        <end position="180"/>
    </location>
</feature>
<feature type="compositionally biased region" description="Basic and acidic residues" evidence="3">
    <location>
        <begin position="211"/>
        <end position="222"/>
    </location>
</feature>
<feature type="compositionally biased region" description="Basic and acidic residues" evidence="3">
    <location>
        <begin position="248"/>
        <end position="265"/>
    </location>
</feature>
<feature type="sequence conflict" description="In Ref. 6; AK067648." evidence="4" ref="6">
    <original>Q</original>
    <variation>R</variation>
    <location>
        <position position="297"/>
    </location>
</feature>
<organism>
    <name type="scientific">Oryza sativa subsp. japonica</name>
    <name type="common">Rice</name>
    <dbReference type="NCBI Taxonomy" id="39947"/>
    <lineage>
        <taxon>Eukaryota</taxon>
        <taxon>Viridiplantae</taxon>
        <taxon>Streptophyta</taxon>
        <taxon>Embryophyta</taxon>
        <taxon>Tracheophyta</taxon>
        <taxon>Spermatophyta</taxon>
        <taxon>Magnoliopsida</taxon>
        <taxon>Liliopsida</taxon>
        <taxon>Poales</taxon>
        <taxon>Poaceae</taxon>
        <taxon>BOP clade</taxon>
        <taxon>Oryzoideae</taxon>
        <taxon>Oryzeae</taxon>
        <taxon>Oryzinae</taxon>
        <taxon>Oryza</taxon>
        <taxon>Oryza sativa</taxon>
    </lineage>
</organism>
<reference key="1">
    <citation type="journal article" date="2002" name="Nature">
        <title>The genome sequence and structure of rice chromosome 1.</title>
        <authorList>
            <person name="Sasaki T."/>
            <person name="Matsumoto T."/>
            <person name="Yamamoto K."/>
            <person name="Sakata K."/>
            <person name="Baba T."/>
            <person name="Katayose Y."/>
            <person name="Wu J."/>
            <person name="Niimura Y."/>
            <person name="Cheng Z."/>
            <person name="Nagamura Y."/>
            <person name="Antonio B.A."/>
            <person name="Kanamori H."/>
            <person name="Hosokawa S."/>
            <person name="Masukawa M."/>
            <person name="Arikawa K."/>
            <person name="Chiden Y."/>
            <person name="Hayashi M."/>
            <person name="Okamoto M."/>
            <person name="Ando T."/>
            <person name="Aoki H."/>
            <person name="Arita K."/>
            <person name="Hamada M."/>
            <person name="Harada C."/>
            <person name="Hijishita S."/>
            <person name="Honda M."/>
            <person name="Ichikawa Y."/>
            <person name="Idonuma A."/>
            <person name="Iijima M."/>
            <person name="Ikeda M."/>
            <person name="Ikeno M."/>
            <person name="Ito S."/>
            <person name="Ito T."/>
            <person name="Ito Y."/>
            <person name="Ito Y."/>
            <person name="Iwabuchi A."/>
            <person name="Kamiya K."/>
            <person name="Karasawa W."/>
            <person name="Katagiri S."/>
            <person name="Kikuta A."/>
            <person name="Kobayashi N."/>
            <person name="Kono I."/>
            <person name="Machita K."/>
            <person name="Maehara T."/>
            <person name="Mizuno H."/>
            <person name="Mizubayashi T."/>
            <person name="Mukai Y."/>
            <person name="Nagasaki H."/>
            <person name="Nakashima M."/>
            <person name="Nakama Y."/>
            <person name="Nakamichi Y."/>
            <person name="Nakamura M."/>
            <person name="Namiki N."/>
            <person name="Negishi M."/>
            <person name="Ohta I."/>
            <person name="Ono N."/>
            <person name="Saji S."/>
            <person name="Sakai K."/>
            <person name="Shibata M."/>
            <person name="Shimokawa T."/>
            <person name="Shomura A."/>
            <person name="Song J."/>
            <person name="Takazaki Y."/>
            <person name="Terasawa K."/>
            <person name="Tsuji K."/>
            <person name="Waki K."/>
            <person name="Yamagata H."/>
            <person name="Yamane H."/>
            <person name="Yoshiki S."/>
            <person name="Yoshihara R."/>
            <person name="Yukawa K."/>
            <person name="Zhong H."/>
            <person name="Iwama H."/>
            <person name="Endo T."/>
            <person name="Ito H."/>
            <person name="Hahn J.H."/>
            <person name="Kim H.-I."/>
            <person name="Eun M.-Y."/>
            <person name="Yano M."/>
            <person name="Jiang J."/>
            <person name="Gojobori T."/>
        </authorList>
    </citation>
    <scope>NUCLEOTIDE SEQUENCE [LARGE SCALE GENOMIC DNA]</scope>
    <source>
        <strain>cv. Nipponbare</strain>
    </source>
</reference>
<reference key="2">
    <citation type="journal article" date="2005" name="Nature">
        <title>The map-based sequence of the rice genome.</title>
        <authorList>
            <consortium name="International rice genome sequencing project (IRGSP)"/>
        </authorList>
    </citation>
    <scope>NUCLEOTIDE SEQUENCE [LARGE SCALE GENOMIC DNA]</scope>
    <source>
        <strain>cv. Nipponbare</strain>
    </source>
</reference>
<reference key="3">
    <citation type="journal article" date="2008" name="Nucleic Acids Res.">
        <title>The rice annotation project database (RAP-DB): 2008 update.</title>
        <authorList>
            <consortium name="The rice annotation project (RAP)"/>
        </authorList>
    </citation>
    <scope>GENOME REANNOTATION</scope>
    <source>
        <strain>cv. Nipponbare</strain>
    </source>
</reference>
<reference key="4">
    <citation type="journal article" date="2013" name="Rice">
        <title>Improvement of the Oryza sativa Nipponbare reference genome using next generation sequence and optical map data.</title>
        <authorList>
            <person name="Kawahara Y."/>
            <person name="de la Bastide M."/>
            <person name="Hamilton J.P."/>
            <person name="Kanamori H."/>
            <person name="McCombie W.R."/>
            <person name="Ouyang S."/>
            <person name="Schwartz D.C."/>
            <person name="Tanaka T."/>
            <person name="Wu J."/>
            <person name="Zhou S."/>
            <person name="Childs K.L."/>
            <person name="Davidson R.M."/>
            <person name="Lin H."/>
            <person name="Quesada-Ocampo L."/>
            <person name="Vaillancourt B."/>
            <person name="Sakai H."/>
            <person name="Lee S.S."/>
            <person name="Kim J."/>
            <person name="Numa H."/>
            <person name="Itoh T."/>
            <person name="Buell C.R."/>
            <person name="Matsumoto T."/>
        </authorList>
    </citation>
    <scope>GENOME REANNOTATION</scope>
    <source>
        <strain>cv. Nipponbare</strain>
    </source>
</reference>
<reference key="5">
    <citation type="journal article" date="2005" name="PLoS Biol.">
        <title>The genomes of Oryza sativa: a history of duplications.</title>
        <authorList>
            <person name="Yu J."/>
            <person name="Wang J."/>
            <person name="Lin W."/>
            <person name="Li S."/>
            <person name="Li H."/>
            <person name="Zhou J."/>
            <person name="Ni P."/>
            <person name="Dong W."/>
            <person name="Hu S."/>
            <person name="Zeng C."/>
            <person name="Zhang J."/>
            <person name="Zhang Y."/>
            <person name="Li R."/>
            <person name="Xu Z."/>
            <person name="Li S."/>
            <person name="Li X."/>
            <person name="Zheng H."/>
            <person name="Cong L."/>
            <person name="Lin L."/>
            <person name="Yin J."/>
            <person name="Geng J."/>
            <person name="Li G."/>
            <person name="Shi J."/>
            <person name="Liu J."/>
            <person name="Lv H."/>
            <person name="Li J."/>
            <person name="Wang J."/>
            <person name="Deng Y."/>
            <person name="Ran L."/>
            <person name="Shi X."/>
            <person name="Wang X."/>
            <person name="Wu Q."/>
            <person name="Li C."/>
            <person name="Ren X."/>
            <person name="Wang J."/>
            <person name="Wang X."/>
            <person name="Li D."/>
            <person name="Liu D."/>
            <person name="Zhang X."/>
            <person name="Ji Z."/>
            <person name="Zhao W."/>
            <person name="Sun Y."/>
            <person name="Zhang Z."/>
            <person name="Bao J."/>
            <person name="Han Y."/>
            <person name="Dong L."/>
            <person name="Ji J."/>
            <person name="Chen P."/>
            <person name="Wu S."/>
            <person name="Liu J."/>
            <person name="Xiao Y."/>
            <person name="Bu D."/>
            <person name="Tan J."/>
            <person name="Yang L."/>
            <person name="Ye C."/>
            <person name="Zhang J."/>
            <person name="Xu J."/>
            <person name="Zhou Y."/>
            <person name="Yu Y."/>
            <person name="Zhang B."/>
            <person name="Zhuang S."/>
            <person name="Wei H."/>
            <person name="Liu B."/>
            <person name="Lei M."/>
            <person name="Yu H."/>
            <person name="Li Y."/>
            <person name="Xu H."/>
            <person name="Wei S."/>
            <person name="He X."/>
            <person name="Fang L."/>
            <person name="Zhang Z."/>
            <person name="Zhang Y."/>
            <person name="Huang X."/>
            <person name="Su Z."/>
            <person name="Tong W."/>
            <person name="Li J."/>
            <person name="Tong Z."/>
            <person name="Li S."/>
            <person name="Ye J."/>
            <person name="Wang L."/>
            <person name="Fang L."/>
            <person name="Lei T."/>
            <person name="Chen C.-S."/>
            <person name="Chen H.-C."/>
            <person name="Xu Z."/>
            <person name="Li H."/>
            <person name="Huang H."/>
            <person name="Zhang F."/>
            <person name="Xu H."/>
            <person name="Li N."/>
            <person name="Zhao C."/>
            <person name="Li S."/>
            <person name="Dong L."/>
            <person name="Huang Y."/>
            <person name="Li L."/>
            <person name="Xi Y."/>
            <person name="Qi Q."/>
            <person name="Li W."/>
            <person name="Zhang B."/>
            <person name="Hu W."/>
            <person name="Zhang Y."/>
            <person name="Tian X."/>
            <person name="Jiao Y."/>
            <person name="Liang X."/>
            <person name="Jin J."/>
            <person name="Gao L."/>
            <person name="Zheng W."/>
            <person name="Hao B."/>
            <person name="Liu S.-M."/>
            <person name="Wang W."/>
            <person name="Yuan L."/>
            <person name="Cao M."/>
            <person name="McDermott J."/>
            <person name="Samudrala R."/>
            <person name="Wang J."/>
            <person name="Wong G.K.-S."/>
            <person name="Yang H."/>
        </authorList>
    </citation>
    <scope>NUCLEOTIDE SEQUENCE [LARGE SCALE GENOMIC DNA]</scope>
    <source>
        <strain>cv. Nipponbare</strain>
    </source>
</reference>
<reference key="6">
    <citation type="journal article" date="2003" name="Science">
        <title>Collection, mapping, and annotation of over 28,000 cDNA clones from japonica rice.</title>
        <authorList>
            <consortium name="The rice full-length cDNA consortium"/>
        </authorList>
    </citation>
    <scope>NUCLEOTIDE SEQUENCE [LARGE SCALE MRNA]</scope>
    <source>
        <strain>cv. Nipponbare</strain>
    </source>
</reference>
<gene>
    <name type="ordered locus">Os01g0744400</name>
    <name type="ordered locus">LOC_Os01g54119</name>
    <name evidence="5" type="ORF">OsJ_03424</name>
    <name type="ORF">OSJNBa0014K08.9</name>
</gene>